<comment type="function">
    <text evidence="1">Ligand for members of the frizzled family of seven transmembrane receptors. Can activate or inhibit canonical Wnt signaling, depending on receptor context. Required during embryogenesis for extension of the primary anterior-posterior axis.</text>
</comment>
<comment type="subcellular location">
    <subcellularLocation>
        <location evidence="4">Secreted</location>
        <location evidence="4">Extracellular space</location>
        <location evidence="4">Extracellular matrix</location>
    </subcellularLocation>
    <subcellularLocation>
        <location evidence="4">Secreted</location>
    </subcellularLocation>
</comment>
<comment type="PTM">
    <text evidence="2 5">Palmitoleoylation is required for efficient binding to frizzled receptors. Depalmitoleoylation leads to Wnt signaling pathway inhibition.</text>
</comment>
<comment type="similarity">
    <text evidence="7">Belongs to the Wnt family.</text>
</comment>
<evidence type="ECO:0000250" key="1">
    <source>
        <dbReference type="UniProtKB" id="P22725"/>
    </source>
</evidence>
<evidence type="ECO:0000250" key="2">
    <source>
        <dbReference type="UniProtKB" id="P27467"/>
    </source>
</evidence>
<evidence type="ECO:0000250" key="3">
    <source>
        <dbReference type="UniProtKB" id="P28026"/>
    </source>
</evidence>
<evidence type="ECO:0000250" key="4">
    <source>
        <dbReference type="UniProtKB" id="P41221"/>
    </source>
</evidence>
<evidence type="ECO:0000250" key="5">
    <source>
        <dbReference type="UniProtKB" id="P56704"/>
    </source>
</evidence>
<evidence type="ECO:0000255" key="6"/>
<evidence type="ECO:0000305" key="7"/>
<keyword id="KW-0217">Developmental protein</keyword>
<keyword id="KW-1015">Disulfide bond</keyword>
<keyword id="KW-0272">Extracellular matrix</keyword>
<keyword id="KW-0325">Glycoprotein</keyword>
<keyword id="KW-0449">Lipoprotein</keyword>
<keyword id="KW-0964">Secreted</keyword>
<keyword id="KW-0879">Wnt signaling pathway</keyword>
<name>WNT5A_PLESK</name>
<gene>
    <name type="primary">WNT-5A</name>
</gene>
<dbReference type="EMBL" id="M91279">
    <property type="protein sequence ID" value="AAA49257.1"/>
    <property type="molecule type" value="Genomic_DNA"/>
</dbReference>
<dbReference type="SMR" id="P28117"/>
<dbReference type="GlyCosmos" id="P28117">
    <property type="glycosylation" value="2 sites, No reported glycans"/>
</dbReference>
<dbReference type="GO" id="GO:0005615">
    <property type="term" value="C:extracellular space"/>
    <property type="evidence" value="ECO:0007669"/>
    <property type="project" value="TreeGrafter"/>
</dbReference>
<dbReference type="GO" id="GO:0005125">
    <property type="term" value="F:cytokine activity"/>
    <property type="evidence" value="ECO:0007669"/>
    <property type="project" value="TreeGrafter"/>
</dbReference>
<dbReference type="GO" id="GO:0005109">
    <property type="term" value="F:frizzled binding"/>
    <property type="evidence" value="ECO:0007669"/>
    <property type="project" value="TreeGrafter"/>
</dbReference>
<dbReference type="GO" id="GO:0060070">
    <property type="term" value="P:canonical Wnt signaling pathway"/>
    <property type="evidence" value="ECO:0007669"/>
    <property type="project" value="TreeGrafter"/>
</dbReference>
<dbReference type="GO" id="GO:0045165">
    <property type="term" value="P:cell fate commitment"/>
    <property type="evidence" value="ECO:0007669"/>
    <property type="project" value="TreeGrafter"/>
</dbReference>
<dbReference type="GO" id="GO:0030182">
    <property type="term" value="P:neuron differentiation"/>
    <property type="evidence" value="ECO:0007669"/>
    <property type="project" value="TreeGrafter"/>
</dbReference>
<dbReference type="Gene3D" id="3.30.2460.20">
    <property type="match status" value="1"/>
</dbReference>
<dbReference type="InterPro" id="IPR005817">
    <property type="entry name" value="Wnt"/>
</dbReference>
<dbReference type="InterPro" id="IPR043158">
    <property type="entry name" value="Wnt_C"/>
</dbReference>
<dbReference type="PANTHER" id="PTHR12027:SF33">
    <property type="entry name" value="PROTEIN WNT-5A"/>
    <property type="match status" value="1"/>
</dbReference>
<dbReference type="PANTHER" id="PTHR12027">
    <property type="entry name" value="WNT RELATED"/>
    <property type="match status" value="1"/>
</dbReference>
<dbReference type="Pfam" id="PF00110">
    <property type="entry name" value="wnt"/>
    <property type="match status" value="1"/>
</dbReference>
<dbReference type="SMART" id="SM00097">
    <property type="entry name" value="WNT1"/>
    <property type="match status" value="1"/>
</dbReference>
<accession>P28117</accession>
<sequence>SGSCSLKTCWLQLADFRKVGDALKEKYDSAAAMKLNPRGKLVQVNSRFNAPTIHDLVYIDPSPDYCVRNESTGSLGTQGRLCNKTSEGMDGCELMCCGRGYDQFKTVQTERCHCKF</sequence>
<feature type="chain" id="PRO_0000200630" description="Protein Wnt-5a">
    <location>
        <begin position="1" status="less than"/>
        <end position="116" status="greater than"/>
    </location>
</feature>
<feature type="lipid moiety-binding region" description="O-palmitoleoyl serine; by PORCN" evidence="5">
    <location>
        <position position="1"/>
    </location>
</feature>
<feature type="glycosylation site" description="N-linked (GlcNAc...) asparagine" evidence="6">
    <location>
        <position position="69"/>
    </location>
</feature>
<feature type="glycosylation site" description="N-linked (GlcNAc...) asparagine" evidence="6">
    <location>
        <position position="83"/>
    </location>
</feature>
<feature type="disulfide bond" evidence="3">
    <location>
        <begin position="82"/>
        <end position="97"/>
    </location>
</feature>
<feature type="non-terminal residue">
    <location>
        <position position="1"/>
    </location>
</feature>
<feature type="non-terminal residue">
    <location>
        <position position="116"/>
    </location>
</feature>
<reference key="1">
    <citation type="journal article" date="1992" name="Proc. Natl. Acad. Sci. U.S.A.">
        <title>Diversification of the Wnt gene family on the ancestral lineage of vertebrates.</title>
        <authorList>
            <person name="Sidow A."/>
        </authorList>
    </citation>
    <scope>NUCLEOTIDE SEQUENCE [GENOMIC DNA]</scope>
</reference>
<organism>
    <name type="scientific">Plestiodon skiltonianus</name>
    <name type="common">Western skink</name>
    <name type="synonym">Eumeces skiltonianus</name>
    <dbReference type="NCBI Taxonomy" id="463545"/>
    <lineage>
        <taxon>Eukaryota</taxon>
        <taxon>Metazoa</taxon>
        <taxon>Chordata</taxon>
        <taxon>Craniata</taxon>
        <taxon>Vertebrata</taxon>
        <taxon>Euteleostomi</taxon>
        <taxon>Lepidosauria</taxon>
        <taxon>Squamata</taxon>
        <taxon>Bifurcata</taxon>
        <taxon>Unidentata</taxon>
        <taxon>Scinciformata</taxon>
        <taxon>Scincidae</taxon>
        <taxon>Scincinae</taxon>
        <taxon>Plestiodon</taxon>
    </lineage>
</organism>
<proteinExistence type="inferred from homology"/>
<protein>
    <recommendedName>
        <fullName>Protein Wnt-5a</fullName>
    </recommendedName>
</protein>